<comment type="function">
    <text evidence="1">Catalyzes the radical-mediated insertion of two sulfur atoms into the C-6 and C-8 positions of the octanoyl moiety bound to the lipoyl domains of lipoate-dependent enzymes, thereby converting the octanoylated domains into lipoylated derivatives.</text>
</comment>
<comment type="catalytic activity">
    <reaction evidence="1">
        <text>[[Fe-S] cluster scaffold protein carrying a second [4Fe-4S](2+) cluster] + N(6)-octanoyl-L-lysyl-[protein] + 2 oxidized [2Fe-2S]-[ferredoxin] + 2 S-adenosyl-L-methionine + 4 H(+) = [[Fe-S] cluster scaffold protein] + N(6)-[(R)-dihydrolipoyl]-L-lysyl-[protein] + 4 Fe(3+) + 2 hydrogen sulfide + 2 5'-deoxyadenosine + 2 L-methionine + 2 reduced [2Fe-2S]-[ferredoxin]</text>
        <dbReference type="Rhea" id="RHEA:16585"/>
        <dbReference type="Rhea" id="RHEA-COMP:9928"/>
        <dbReference type="Rhea" id="RHEA-COMP:10000"/>
        <dbReference type="Rhea" id="RHEA-COMP:10001"/>
        <dbReference type="Rhea" id="RHEA-COMP:10475"/>
        <dbReference type="Rhea" id="RHEA-COMP:14568"/>
        <dbReference type="Rhea" id="RHEA-COMP:14569"/>
        <dbReference type="ChEBI" id="CHEBI:15378"/>
        <dbReference type="ChEBI" id="CHEBI:17319"/>
        <dbReference type="ChEBI" id="CHEBI:29034"/>
        <dbReference type="ChEBI" id="CHEBI:29919"/>
        <dbReference type="ChEBI" id="CHEBI:33722"/>
        <dbReference type="ChEBI" id="CHEBI:33737"/>
        <dbReference type="ChEBI" id="CHEBI:33738"/>
        <dbReference type="ChEBI" id="CHEBI:57844"/>
        <dbReference type="ChEBI" id="CHEBI:59789"/>
        <dbReference type="ChEBI" id="CHEBI:78809"/>
        <dbReference type="ChEBI" id="CHEBI:83100"/>
        <dbReference type="EC" id="2.8.1.8"/>
    </reaction>
</comment>
<comment type="cofactor">
    <cofactor evidence="1">
        <name>[4Fe-4S] cluster</name>
        <dbReference type="ChEBI" id="CHEBI:49883"/>
    </cofactor>
    <text evidence="1">Binds 2 [4Fe-4S] clusters per subunit. One cluster is coordinated with 3 cysteines and an exchangeable S-adenosyl-L-methionine.</text>
</comment>
<comment type="pathway">
    <text evidence="1">Protein modification; protein lipoylation via endogenous pathway; protein N(6)-(lipoyl)lysine from octanoyl-[acyl-carrier-protein].</text>
</comment>
<comment type="subcellular location">
    <subcellularLocation>
        <location evidence="1">Cytoplasm</location>
    </subcellularLocation>
</comment>
<comment type="similarity">
    <text evidence="1">Belongs to the radical SAM superfamily. Lipoyl synthase family.</text>
</comment>
<reference key="1">
    <citation type="journal article" date="2001" name="Lancet">
        <title>Whole genome sequencing of meticillin-resistant Staphylococcus aureus.</title>
        <authorList>
            <person name="Kuroda M."/>
            <person name="Ohta T."/>
            <person name="Uchiyama I."/>
            <person name="Baba T."/>
            <person name="Yuzawa H."/>
            <person name="Kobayashi I."/>
            <person name="Cui L."/>
            <person name="Oguchi A."/>
            <person name="Aoki K."/>
            <person name="Nagai Y."/>
            <person name="Lian J.-Q."/>
            <person name="Ito T."/>
            <person name="Kanamori M."/>
            <person name="Matsumaru H."/>
            <person name="Maruyama A."/>
            <person name="Murakami H."/>
            <person name="Hosoyama A."/>
            <person name="Mizutani-Ui Y."/>
            <person name="Takahashi N.K."/>
            <person name="Sawano T."/>
            <person name="Inoue R."/>
            <person name="Kaito C."/>
            <person name="Sekimizu K."/>
            <person name="Hirakawa H."/>
            <person name="Kuhara S."/>
            <person name="Goto S."/>
            <person name="Yabuzaki J."/>
            <person name="Kanehisa M."/>
            <person name="Yamashita A."/>
            <person name="Oshima K."/>
            <person name="Furuya K."/>
            <person name="Yoshino C."/>
            <person name="Shiba T."/>
            <person name="Hattori M."/>
            <person name="Ogasawara N."/>
            <person name="Hayashi H."/>
            <person name="Hiramatsu K."/>
        </authorList>
    </citation>
    <scope>NUCLEOTIDE SEQUENCE [LARGE SCALE GENOMIC DNA]</scope>
    <source>
        <strain>Mu50 / ATCC 700699</strain>
    </source>
</reference>
<sequence length="305" mass="34885">MATKNEEILRKPDWLKIKLNTNENYTGLKKMMREKNLNTVCEEAKCPNIHECWGARRTATFMILGAVCTRACRFCAVKTGLPNELDLNEPERVAESVELMNLKHVVITAVARDDLRDAGSNVYAETVRKVRERNPFTTIEILPSDMGGDYDALETLMASRPDILNHNIETVRRLTPRVRARATYDRTLEFLRRSKELQPDIPTKSSIMVGLGETIEEIYETMDDLRANDVDILTIGQYLQPSRKHLKVQKYYTPLEFGKLRKVAMDKGFKHCQAGPLVRSSYHADEQVNEAAKEKQRQGEAQLNS</sequence>
<protein>
    <recommendedName>
        <fullName evidence="1">Lipoyl synthase</fullName>
        <ecNumber evidence="1">2.8.1.8</ecNumber>
    </recommendedName>
    <alternativeName>
        <fullName evidence="1">Lip-syn</fullName>
        <shortName evidence="1">LS</shortName>
    </alternativeName>
    <alternativeName>
        <fullName evidence="1">Lipoate synthase</fullName>
    </alternativeName>
    <alternativeName>
        <fullName evidence="1">Lipoic acid synthase</fullName>
    </alternativeName>
    <alternativeName>
        <fullName evidence="1">Sulfur insertion protein LipA</fullName>
    </alternativeName>
</protein>
<organism>
    <name type="scientific">Staphylococcus aureus (strain Mu50 / ATCC 700699)</name>
    <dbReference type="NCBI Taxonomy" id="158878"/>
    <lineage>
        <taxon>Bacteria</taxon>
        <taxon>Bacillati</taxon>
        <taxon>Bacillota</taxon>
        <taxon>Bacilli</taxon>
        <taxon>Bacillales</taxon>
        <taxon>Staphylococcaceae</taxon>
        <taxon>Staphylococcus</taxon>
    </lineage>
</organism>
<gene>
    <name evidence="1" type="primary">lipA</name>
    <name type="ordered locus">SAV0924</name>
</gene>
<accession>P65285</accession>
<accession>Q99VF2</accession>
<evidence type="ECO:0000255" key="1">
    <source>
        <dbReference type="HAMAP-Rule" id="MF_00206"/>
    </source>
</evidence>
<evidence type="ECO:0000255" key="2">
    <source>
        <dbReference type="PROSITE-ProRule" id="PRU01266"/>
    </source>
</evidence>
<evidence type="ECO:0000256" key="3">
    <source>
        <dbReference type="SAM" id="MobiDB-lite"/>
    </source>
</evidence>
<keyword id="KW-0004">4Fe-4S</keyword>
<keyword id="KW-0963">Cytoplasm</keyword>
<keyword id="KW-0408">Iron</keyword>
<keyword id="KW-0411">Iron-sulfur</keyword>
<keyword id="KW-0479">Metal-binding</keyword>
<keyword id="KW-0949">S-adenosyl-L-methionine</keyword>
<keyword id="KW-0808">Transferase</keyword>
<dbReference type="EC" id="2.8.1.8" evidence="1"/>
<dbReference type="EMBL" id="BA000017">
    <property type="protein sequence ID" value="BAB57086.1"/>
    <property type="molecule type" value="Genomic_DNA"/>
</dbReference>
<dbReference type="RefSeq" id="WP_000201875.1">
    <property type="nucleotide sequence ID" value="NC_002758.2"/>
</dbReference>
<dbReference type="SMR" id="P65285"/>
<dbReference type="GeneID" id="98345243"/>
<dbReference type="KEGG" id="sav:SAV0924"/>
<dbReference type="HOGENOM" id="CLU_033144_2_1_9"/>
<dbReference type="PhylomeDB" id="P65285"/>
<dbReference type="Proteomes" id="UP000002481">
    <property type="component" value="Chromosome"/>
</dbReference>
<dbReference type="GO" id="GO:0005737">
    <property type="term" value="C:cytoplasm"/>
    <property type="evidence" value="ECO:0007669"/>
    <property type="project" value="UniProtKB-SubCell"/>
</dbReference>
<dbReference type="GO" id="GO:0051539">
    <property type="term" value="F:4 iron, 4 sulfur cluster binding"/>
    <property type="evidence" value="ECO:0007669"/>
    <property type="project" value="UniProtKB-UniRule"/>
</dbReference>
<dbReference type="GO" id="GO:0016992">
    <property type="term" value="F:lipoate synthase activity"/>
    <property type="evidence" value="ECO:0007669"/>
    <property type="project" value="UniProtKB-UniRule"/>
</dbReference>
<dbReference type="GO" id="GO:0046872">
    <property type="term" value="F:metal ion binding"/>
    <property type="evidence" value="ECO:0007669"/>
    <property type="project" value="UniProtKB-KW"/>
</dbReference>
<dbReference type="CDD" id="cd01335">
    <property type="entry name" value="Radical_SAM"/>
    <property type="match status" value="1"/>
</dbReference>
<dbReference type="FunFam" id="3.20.20.70:FF:000040">
    <property type="entry name" value="Lipoyl synthase"/>
    <property type="match status" value="1"/>
</dbReference>
<dbReference type="Gene3D" id="3.20.20.70">
    <property type="entry name" value="Aldolase class I"/>
    <property type="match status" value="1"/>
</dbReference>
<dbReference type="HAMAP" id="MF_00206">
    <property type="entry name" value="Lipoyl_synth"/>
    <property type="match status" value="1"/>
</dbReference>
<dbReference type="InterPro" id="IPR013785">
    <property type="entry name" value="Aldolase_TIM"/>
</dbReference>
<dbReference type="InterPro" id="IPR006638">
    <property type="entry name" value="Elp3/MiaA/NifB-like_rSAM"/>
</dbReference>
<dbReference type="InterPro" id="IPR031691">
    <property type="entry name" value="LIAS_N"/>
</dbReference>
<dbReference type="InterPro" id="IPR003698">
    <property type="entry name" value="Lipoyl_synth"/>
</dbReference>
<dbReference type="InterPro" id="IPR007197">
    <property type="entry name" value="rSAM"/>
</dbReference>
<dbReference type="NCBIfam" id="TIGR00510">
    <property type="entry name" value="lipA"/>
    <property type="match status" value="1"/>
</dbReference>
<dbReference type="NCBIfam" id="NF004019">
    <property type="entry name" value="PRK05481.1"/>
    <property type="match status" value="1"/>
</dbReference>
<dbReference type="NCBIfam" id="NF009544">
    <property type="entry name" value="PRK12928.1"/>
    <property type="match status" value="1"/>
</dbReference>
<dbReference type="PANTHER" id="PTHR10949">
    <property type="entry name" value="LIPOYL SYNTHASE"/>
    <property type="match status" value="1"/>
</dbReference>
<dbReference type="PANTHER" id="PTHR10949:SF0">
    <property type="entry name" value="LIPOYL SYNTHASE, MITOCHONDRIAL"/>
    <property type="match status" value="1"/>
</dbReference>
<dbReference type="Pfam" id="PF16881">
    <property type="entry name" value="LIAS_N"/>
    <property type="match status" value="1"/>
</dbReference>
<dbReference type="Pfam" id="PF04055">
    <property type="entry name" value="Radical_SAM"/>
    <property type="match status" value="1"/>
</dbReference>
<dbReference type="PIRSF" id="PIRSF005963">
    <property type="entry name" value="Lipoyl_synth"/>
    <property type="match status" value="1"/>
</dbReference>
<dbReference type="SFLD" id="SFLDF00271">
    <property type="entry name" value="lipoyl_synthase"/>
    <property type="match status" value="1"/>
</dbReference>
<dbReference type="SFLD" id="SFLDS00029">
    <property type="entry name" value="Radical_SAM"/>
    <property type="match status" value="1"/>
</dbReference>
<dbReference type="SMART" id="SM00729">
    <property type="entry name" value="Elp3"/>
    <property type="match status" value="1"/>
</dbReference>
<dbReference type="SUPFAM" id="SSF102114">
    <property type="entry name" value="Radical SAM enzymes"/>
    <property type="match status" value="1"/>
</dbReference>
<dbReference type="PROSITE" id="PS51918">
    <property type="entry name" value="RADICAL_SAM"/>
    <property type="match status" value="1"/>
</dbReference>
<name>LIPA_STAAM</name>
<feature type="chain" id="PRO_0000102358" description="Lipoyl synthase">
    <location>
        <begin position="1"/>
        <end position="305"/>
    </location>
</feature>
<feature type="domain" description="Radical SAM core" evidence="2">
    <location>
        <begin position="54"/>
        <end position="270"/>
    </location>
</feature>
<feature type="region of interest" description="Disordered" evidence="3">
    <location>
        <begin position="283"/>
        <end position="305"/>
    </location>
</feature>
<feature type="compositionally biased region" description="Basic and acidic residues" evidence="3">
    <location>
        <begin position="283"/>
        <end position="298"/>
    </location>
</feature>
<feature type="binding site" evidence="1">
    <location>
        <position position="41"/>
    </location>
    <ligand>
        <name>[4Fe-4S] cluster</name>
        <dbReference type="ChEBI" id="CHEBI:49883"/>
        <label>1</label>
    </ligand>
</feature>
<feature type="binding site" evidence="1">
    <location>
        <position position="46"/>
    </location>
    <ligand>
        <name>[4Fe-4S] cluster</name>
        <dbReference type="ChEBI" id="CHEBI:49883"/>
        <label>1</label>
    </ligand>
</feature>
<feature type="binding site" evidence="1">
    <location>
        <position position="52"/>
    </location>
    <ligand>
        <name>[4Fe-4S] cluster</name>
        <dbReference type="ChEBI" id="CHEBI:49883"/>
        <label>1</label>
    </ligand>
</feature>
<feature type="binding site" evidence="1">
    <location>
        <position position="68"/>
    </location>
    <ligand>
        <name>[4Fe-4S] cluster</name>
        <dbReference type="ChEBI" id="CHEBI:49883"/>
        <label>2</label>
        <note>4Fe-4S-S-AdoMet</note>
    </ligand>
</feature>
<feature type="binding site" evidence="1">
    <location>
        <position position="72"/>
    </location>
    <ligand>
        <name>[4Fe-4S] cluster</name>
        <dbReference type="ChEBI" id="CHEBI:49883"/>
        <label>2</label>
        <note>4Fe-4S-S-AdoMet</note>
    </ligand>
</feature>
<feature type="binding site" evidence="1">
    <location>
        <position position="75"/>
    </location>
    <ligand>
        <name>[4Fe-4S] cluster</name>
        <dbReference type="ChEBI" id="CHEBI:49883"/>
        <label>2</label>
        <note>4Fe-4S-S-AdoMet</note>
    </ligand>
</feature>
<feature type="binding site" evidence="1">
    <location>
        <position position="281"/>
    </location>
    <ligand>
        <name>[4Fe-4S] cluster</name>
        <dbReference type="ChEBI" id="CHEBI:49883"/>
        <label>1</label>
    </ligand>
</feature>
<proteinExistence type="inferred from homology"/>